<organism>
    <name type="scientific">Penicillium crustosum</name>
    <name type="common">Blue mold fungus</name>
    <dbReference type="NCBI Taxonomy" id="36656"/>
    <lineage>
        <taxon>Eukaryota</taxon>
        <taxon>Fungi</taxon>
        <taxon>Dikarya</taxon>
        <taxon>Ascomycota</taxon>
        <taxon>Pezizomycotina</taxon>
        <taxon>Eurotiomycetes</taxon>
        <taxon>Eurotiomycetidae</taxon>
        <taxon>Eurotiales</taxon>
        <taxon>Aspergillaceae</taxon>
        <taxon>Penicillium</taxon>
    </lineage>
</organism>
<sequence length="214" mass="24011">MAALSFQCLCVASAVRAWERIESMVDVSFDVIIAASAQTIQLSQQSQQCQLHSQSSAAEAYNTFIRIYGRLVPLLERAITTYATNLQPPLSTSPTFQRTDPRNLTYPLDNQVLGSVLRDFSTHRSLQEQRNPATMVCRPSKMTLGQYEMDEQQSQYLALDVICRTLRNLVIVLQEMGGGENAEIRQVDARLLTILVQVRRLLENTSATLSILES</sequence>
<reference key="1">
    <citation type="journal article" date="2019" name="J. Am. Chem. Soc.">
        <title>Peniphenone and penilactone formation in Penicillium crustosum via 1,4-Michael additions of ortho-quinone methide from hydroxyclavatol to gamma-butyrolactones from Crustosic Acid.</title>
        <authorList>
            <person name="Fan J."/>
            <person name="Liao G."/>
            <person name="Kindinger F."/>
            <person name="Ludwig-Radtke L."/>
            <person name="Yin W.B."/>
            <person name="Li S.M."/>
        </authorList>
    </citation>
    <scope>NUCLEOTIDE SEQUENCE [GENOMIC DNA]</scope>
    <scope>FUNCTION</scope>
    <source>
        <strain>PRB-2</strain>
    </source>
</reference>
<reference key="2">
    <citation type="journal article" date="2020" name="J. Org. Chem.">
        <title>Increasing Structural Diversity of Natural Products by Michael Addition with ortho-Quinone Methide as the Acceptor.</title>
        <authorList>
            <person name="Liao G."/>
            <person name="Fan J."/>
            <person name="Ludwig-Radtke L."/>
            <person name="Backhaus K."/>
            <person name="Li S.M."/>
        </authorList>
    </citation>
    <scope>FUNCTION</scope>
</reference>
<evidence type="ECO:0000250" key="1">
    <source>
        <dbReference type="UniProtKB" id="A0A0E0RXA7"/>
    </source>
</evidence>
<evidence type="ECO:0000250" key="2">
    <source>
        <dbReference type="UniProtKB" id="A0A161CKG1"/>
    </source>
</evidence>
<evidence type="ECO:0000255" key="3"/>
<evidence type="ECO:0000255" key="4">
    <source>
        <dbReference type="PROSITE-ProRule" id="PRU00498"/>
    </source>
</evidence>
<evidence type="ECO:0000269" key="5">
    <source>
    </source>
</evidence>
<evidence type="ECO:0000269" key="6">
    <source>
    </source>
</evidence>
<evidence type="ECO:0000303" key="7">
    <source>
    </source>
</evidence>
<evidence type="ECO:0000305" key="8">
    <source>
    </source>
</evidence>
<gene>
    <name evidence="7" type="primary">claB</name>
</gene>
<protein>
    <recommendedName>
        <fullName evidence="7">Clavatol biosynthesis cluster protein B</fullName>
    </recommendedName>
</protein>
<proteinExistence type="inferred from homology"/>
<keyword id="KW-0325">Glycoprotein</keyword>
<keyword id="KW-0732">Signal</keyword>
<accession>A0A481WNL0</accession>
<comment type="function">
    <text evidence="1 2 5 6 8">Part of the cla gene cluster that produces clavatol and ortho-quinone methide (PubMed:30811183). The clavatol biosynthesis cluster cla and the terrestric acid cluster tra are both involved in the production of peniphenones and penilactones (PubMed:30811183). The non-reducing PKS claF is responsible for the formation of clavatol from successive condensations of 3 malonyl-CoA units, presumably with a simple acetyl-CoA starter unit, and 2 methylation steps (PubMed:30811183). The esterase claE probably collaborates with claF by catalyzing the hydrolysis of ACP-bound acyl intermediates to free the ACP from stalled intermediates (By similarity). The clavatol oxidase claD then converts clavatol to hydroxyclavatol (PubMed:30811183). Spontaneous dehydration of hydroxyclavatol leads to the accumulation of the highly active ortho-quinone methide (PubMed:30811183, PubMed:31860310). On the other hand, the PKS-NRPS hybrid traA is involved in the formation of crustosic acid, with the help of traB and traD (PubMed:30811183). The polyketide synthase module (PKS) of traA is responsible for the synthesis of the polyketide backbone via the condensation of an acetyl-CoA starter unit with 3 malonyl-CoA units (PubMed:30811183). The downstream nonribosomal peptide synthetase (NRPS) module then amidates the carboxyl end of the polyketide with L-malic acid (PubMed:30811183). Because traA lacks a designated enoylreductase (ER) domain, the required activity is provided the enoyl reductase traG (By similarity). Crustosic acid undergoes decarboxylation and isomerization to the terrestric acid, catalyzed by the 2-oxoglutarate-dependent dioxygenase traH (PubMed:30811183). Both acids are further converted to the 2 gamma-butyrolactones (R)-5-methyltetronic acid and (S)-5-carboxylmethyltetronic acid, with involvement of the cytochrome P450 monooxygenase claJ (PubMed:30811183). Spontaneous addition of the methide to these gamma-butyrolactones leads to peniphenone D and penilactone D, which undergo again stereospecific attacking by methide to give penilactones A and B (PubMed:30811183, PubMed:31860310). The function of claB has not been investigated yet (Probable).</text>
</comment>
<comment type="pathway">
    <text evidence="8">Secondary metabolite biosynthesis.</text>
</comment>
<name>CLAB_PENCR</name>
<feature type="signal peptide" evidence="3">
    <location>
        <begin position="1"/>
        <end position="17"/>
    </location>
</feature>
<feature type="chain" id="PRO_5019840267" description="Clavatol biosynthesis cluster protein B">
    <location>
        <begin position="18"/>
        <end position="214"/>
    </location>
</feature>
<feature type="glycosylation site" description="N-linked (GlcNAc...) asparagine" evidence="4">
    <location>
        <position position="103"/>
    </location>
</feature>
<feature type="glycosylation site" description="N-linked (GlcNAc...) asparagine" evidence="4">
    <location>
        <position position="204"/>
    </location>
</feature>
<dbReference type="EMBL" id="MK360918">
    <property type="protein sequence ID" value="QBK15040.1"/>
    <property type="molecule type" value="Genomic_DNA"/>
</dbReference>
<dbReference type="SMR" id="A0A481WNL0"/>
<dbReference type="GlyCosmos" id="A0A481WNL0">
    <property type="glycosylation" value="2 sites, No reported glycans"/>
</dbReference>
<dbReference type="OrthoDB" id="4411668at2759"/>